<feature type="signal peptide" evidence="2">
    <location>
        <begin position="1"/>
        <end position="22"/>
    </location>
</feature>
<feature type="chain" id="PRO_0000252341" description="Digalactosyldiacylglycerol synthase 2, chloroplastic">
    <location>
        <begin position="23"/>
        <end position="463"/>
    </location>
</feature>
<feature type="sequence conflict" description="In Ref. 2; AFK34403." evidence="5" ref="2">
    <original>N</original>
    <variation>S</variation>
    <location>
        <position position="58"/>
    </location>
</feature>
<protein>
    <recommendedName>
        <fullName evidence="4">Digalactosyldiacylglycerol synthase 2, chloroplastic</fullName>
        <shortName evidence="4">LjDGD2</shortName>
        <ecNumber evidence="1">2.4.1.241</ecNumber>
    </recommendedName>
</protein>
<gene>
    <name evidence="4" type="primary">DGD2</name>
</gene>
<comment type="function">
    <text evidence="3">Involved in the synthesis of diacylglycerol galactolipids that are specifically found in thylakoid and in nodule peribacteroid membranes (PubMed:15159398). Specific for alpha-glycosidic linkages (PubMed:15159398).</text>
</comment>
<comment type="catalytic activity">
    <reaction evidence="1">
        <text>a 1,2-diacyl-3-O-(beta-D-galactosyl)-sn-glycerol + UDP-alpha-D-galactose = a 1,2-diacyl-3-O-[alpha-D-galactosyl-(1-&gt;6)-beta-D-galactosyl]-sn-glycerol + UDP + H(+)</text>
        <dbReference type="Rhea" id="RHEA:10520"/>
        <dbReference type="ChEBI" id="CHEBI:15378"/>
        <dbReference type="ChEBI" id="CHEBI:17615"/>
        <dbReference type="ChEBI" id="CHEBI:28396"/>
        <dbReference type="ChEBI" id="CHEBI:58223"/>
        <dbReference type="ChEBI" id="CHEBI:66914"/>
        <dbReference type="EC" id="2.4.1.241"/>
    </reaction>
</comment>
<comment type="subcellular location">
    <subcellularLocation>
        <location evidence="1">Plastid</location>
        <location evidence="1">Chloroplast outer membrane</location>
    </subcellularLocation>
    <subcellularLocation>
        <location evidence="1">Plastid outer membrane</location>
    </subcellularLocation>
</comment>
<comment type="tissue specificity">
    <text evidence="3">High expression in nodules infected cells, and low in nodule and root vascular tissue.</text>
</comment>
<comment type="similarity">
    <text evidence="5">Belongs to the glycosyltransferase group 1 family. Glycosyltransferase 4 subfamily.</text>
</comment>
<evidence type="ECO:0000250" key="1">
    <source>
        <dbReference type="UniProtKB" id="Q8W1S1"/>
    </source>
</evidence>
<evidence type="ECO:0000255" key="2"/>
<evidence type="ECO:0000269" key="3">
    <source>
    </source>
</evidence>
<evidence type="ECO:0000303" key="4">
    <source>
    </source>
</evidence>
<evidence type="ECO:0000305" key="5"/>
<dbReference type="EC" id="2.4.1.241" evidence="1"/>
<dbReference type="EMBL" id="AY635910">
    <property type="protein sequence ID" value="AAT67423.1"/>
    <property type="molecule type" value="mRNA"/>
</dbReference>
<dbReference type="EMBL" id="BT134608">
    <property type="protein sequence ID" value="AFK34403.1"/>
    <property type="molecule type" value="mRNA"/>
</dbReference>
<dbReference type="SMR" id="Q6DW73"/>
<dbReference type="CAZy" id="GT4">
    <property type="family name" value="Glycosyltransferase Family 4"/>
</dbReference>
<dbReference type="OrthoDB" id="44480at2759"/>
<dbReference type="GO" id="GO:0009707">
    <property type="term" value="C:chloroplast outer membrane"/>
    <property type="evidence" value="ECO:0007669"/>
    <property type="project" value="UniProtKB-SubCell"/>
</dbReference>
<dbReference type="GO" id="GO:0046481">
    <property type="term" value="F:digalactosyldiacylglycerol synthase activity"/>
    <property type="evidence" value="ECO:0007669"/>
    <property type="project" value="UniProtKB-EC"/>
</dbReference>
<dbReference type="GO" id="GO:0019375">
    <property type="term" value="P:galactolipid biosynthetic process"/>
    <property type="evidence" value="ECO:0007669"/>
    <property type="project" value="TreeGrafter"/>
</dbReference>
<dbReference type="GO" id="GO:0009877">
    <property type="term" value="P:nodulation"/>
    <property type="evidence" value="ECO:0007669"/>
    <property type="project" value="UniProtKB-KW"/>
</dbReference>
<dbReference type="CDD" id="cd01635">
    <property type="entry name" value="Glycosyltransferase_GTB-type"/>
    <property type="match status" value="1"/>
</dbReference>
<dbReference type="FunFam" id="3.40.50.2000:FF:000084">
    <property type="entry name" value="Digalactosyldiacylglycerol synthase 2 chloroplastic"/>
    <property type="match status" value="1"/>
</dbReference>
<dbReference type="Gene3D" id="3.40.50.2000">
    <property type="entry name" value="Glycogen Phosphorylase B"/>
    <property type="match status" value="1"/>
</dbReference>
<dbReference type="InterPro" id="IPR044525">
    <property type="entry name" value="DGDG1/2"/>
</dbReference>
<dbReference type="InterPro" id="IPR001296">
    <property type="entry name" value="Glyco_trans_1"/>
</dbReference>
<dbReference type="PANTHER" id="PTHR46132">
    <property type="entry name" value="DIGALACTOSYLDIACYLGLYCEROL SYNTHASE 2, CHLOROPLASTIC"/>
    <property type="match status" value="1"/>
</dbReference>
<dbReference type="PANTHER" id="PTHR46132:SF1">
    <property type="entry name" value="DIGALACTOSYLDIACYLGLYCEROL SYNTHASE 2, CHLOROPLASTIC"/>
    <property type="match status" value="1"/>
</dbReference>
<dbReference type="Pfam" id="PF00534">
    <property type="entry name" value="Glycos_transf_1"/>
    <property type="match status" value="1"/>
</dbReference>
<dbReference type="SUPFAM" id="SSF53756">
    <property type="entry name" value="UDP-Glycosyltransferase/glycogen phosphorylase"/>
    <property type="match status" value="1"/>
</dbReference>
<reference key="1">
    <citation type="journal article" date="2004" name="J. Biol. Chem.">
        <title>The galactolipid digalactosyldiacylglycerol accumulates in the peribacteroid membrane of nitrogen-fixing nodules of Soybean and Lotus.</title>
        <authorList>
            <person name="Gaude N."/>
            <person name="Tippmann H."/>
            <person name="Flemetakis E."/>
            <person name="Katinakis P."/>
            <person name="Udvardi M."/>
            <person name="Doermann P."/>
        </authorList>
    </citation>
    <scope>NUCLEOTIDE SEQUENCE [MRNA]</scope>
    <scope>FUNCTION</scope>
    <scope>SUBCELLULAR LOCATION</scope>
    <scope>TISSUE SPECIFICITY</scope>
</reference>
<reference key="2">
    <citation type="submission" date="2012-05" db="EMBL/GenBank/DDBJ databases">
        <authorList>
            <person name="Krishnakumar V."/>
            <person name="Cheung F."/>
            <person name="Xiao Y."/>
            <person name="Chan A."/>
            <person name="Moskal W.A."/>
            <person name="Town C.D."/>
        </authorList>
    </citation>
    <scope>NUCLEOTIDE SEQUENCE [MRNA]</scope>
</reference>
<proteinExistence type="evidence at transcript level"/>
<keyword id="KW-0150">Chloroplast</keyword>
<keyword id="KW-0328">Glycosyltransferase</keyword>
<keyword id="KW-0472">Membrane</keyword>
<keyword id="KW-0536">Nodulation</keyword>
<keyword id="KW-0934">Plastid</keyword>
<keyword id="KW-1002">Plastid outer membrane</keyword>
<keyword id="KW-0732">Signal</keyword>
<keyword id="KW-0808">Transferase</keyword>
<name>DGDG2_LOTJA</name>
<accession>Q6DW73</accession>
<accession>I3S2B1</accession>
<sequence>MGKKQHIAIFTTASLPWLTGTAVNPLFRAAYLSKDGERDVTLVIPWLSLKDQALVYPNNITFASPSEHEKYIRQWLEERVGFTSGFSIKFYPGKFSRDKRSILAVGDISEVIPDKEADIAVLEEPEHLTWFHHGKRWKTKFRLVIGIIHTNYLEYVKREKNGQMQAFLLKYLNNWVVGIYCHKVIRLSAATQDYSGSIVCNVHGVNPKFLEIGKKKREQQQNGDQAFTKGAYFIGKMVWSKGYKELLHLFKNHQKELSALEVDLFGSGEDSDEVQKAAKKLEMAVRVHPARDHADALFHDYKLFLNPSTTDVVCTTTAEALAMGKIVVCANHCSNEFFKQFPNCWTFDESKGFVQLILKALAEEPAQLTDAQRHDLSWEAATERFLKAAELDKPFEKKLSRSTSIYMSTSLNLQQTVDDASAYVHHVASGFEISRRMFGAIPGSLKPDEELSKELGLSDSGRK</sequence>
<organism>
    <name type="scientific">Lotus japonicus</name>
    <name type="common">Lotus corniculatus var. japonicus</name>
    <dbReference type="NCBI Taxonomy" id="34305"/>
    <lineage>
        <taxon>Eukaryota</taxon>
        <taxon>Viridiplantae</taxon>
        <taxon>Streptophyta</taxon>
        <taxon>Embryophyta</taxon>
        <taxon>Tracheophyta</taxon>
        <taxon>Spermatophyta</taxon>
        <taxon>Magnoliopsida</taxon>
        <taxon>eudicotyledons</taxon>
        <taxon>Gunneridae</taxon>
        <taxon>Pentapetalae</taxon>
        <taxon>rosids</taxon>
        <taxon>fabids</taxon>
        <taxon>Fabales</taxon>
        <taxon>Fabaceae</taxon>
        <taxon>Papilionoideae</taxon>
        <taxon>50 kb inversion clade</taxon>
        <taxon>NPAAA clade</taxon>
        <taxon>Hologalegina</taxon>
        <taxon>robinioid clade</taxon>
        <taxon>Loteae</taxon>
        <taxon>Lotus</taxon>
    </lineage>
</organism>